<keyword id="KW-0378">Hydrolase</keyword>
<keyword id="KW-0464">Manganese</keyword>
<keyword id="KW-0479">Metal-binding</keyword>
<keyword id="KW-0934">Plastid</keyword>
<keyword id="KW-0904">Protein phosphatase</keyword>
<keyword id="KW-1185">Reference proteome</keyword>
<evidence type="ECO:0000250" key="1"/>
<evidence type="ECO:0000269" key="2">
    <source>
    </source>
</evidence>
<evidence type="ECO:0000305" key="3"/>
<proteinExistence type="evidence at transcript level"/>
<reference key="1">
    <citation type="journal article" date="1993" name="Plant Mol. Biol.">
        <title>Identification and molecular cloning of two homologues of protein phosphatase X from Arabidopsis thaliana.</title>
        <authorList>
            <person name="Perez-Callejon E."/>
            <person name="Casamayor A."/>
            <person name="Pujol G."/>
            <person name="Clua E."/>
            <person name="Ferrer A."/>
            <person name="Arino J."/>
        </authorList>
    </citation>
    <scope>NUCLEOTIDE SEQUENCE [MRNA]</scope>
    <source>
        <tissue>Leaf</tissue>
    </source>
</reference>
<reference key="2">
    <citation type="journal article" date="2000" name="Plant Mol. Biol.">
        <title>The Arabidopsis thaliana PPX/PP4 phosphatases: molecular cloning and structural organization of the genes and immunolocalization of the proteins to plastids.</title>
        <authorList>
            <person name="Pujol G."/>
            <person name="Baskin T.I."/>
            <person name="Casamayor A."/>
            <person name="Cortadellas N."/>
            <person name="Ferrer A."/>
            <person name="Arino J."/>
        </authorList>
    </citation>
    <scope>NUCLEOTIDE SEQUENCE [GENOMIC DNA]</scope>
    <scope>SUBCELLULAR LOCATION</scope>
    <scope>TISSUE SPECIFICITY</scope>
    <source>
        <strain>cv. Columbia</strain>
    </source>
</reference>
<reference key="3">
    <citation type="journal article" date="1998" name="DNA Res.">
        <title>Structural analysis of Arabidopsis thaliana chromosome 5. IV. Sequence features of the regions of 1,456,315 bp covered by nineteen physically assigned P1 and TAC clones.</title>
        <authorList>
            <person name="Sato S."/>
            <person name="Kaneko T."/>
            <person name="Kotani H."/>
            <person name="Nakamura Y."/>
            <person name="Asamizu E."/>
            <person name="Miyajima N."/>
            <person name="Tabata S."/>
        </authorList>
    </citation>
    <scope>NUCLEOTIDE SEQUENCE [LARGE SCALE GENOMIC DNA]</scope>
    <source>
        <strain>cv. Columbia</strain>
    </source>
</reference>
<reference key="4">
    <citation type="journal article" date="2017" name="Plant J.">
        <title>Araport11: a complete reannotation of the Arabidopsis thaliana reference genome.</title>
        <authorList>
            <person name="Cheng C.Y."/>
            <person name="Krishnakumar V."/>
            <person name="Chan A.P."/>
            <person name="Thibaud-Nissen F."/>
            <person name="Schobel S."/>
            <person name="Town C.D."/>
        </authorList>
    </citation>
    <scope>GENOME REANNOTATION</scope>
    <source>
        <strain>cv. Columbia</strain>
    </source>
</reference>
<reference key="5">
    <citation type="submission" date="2006-03" db="EMBL/GenBank/DDBJ databases">
        <title>Arabidopsis ORF clones.</title>
        <authorList>
            <person name="Shinn P."/>
            <person name="Chen H."/>
            <person name="Kim C.J."/>
            <person name="Ecker J.R."/>
        </authorList>
    </citation>
    <scope>NUCLEOTIDE SEQUENCE [LARGE SCALE MRNA]</scope>
    <source>
        <strain>cv. Columbia</strain>
    </source>
</reference>
<reference key="6">
    <citation type="journal article" date="2007" name="Trends Plant Sci.">
        <title>Arabidopsis PPP family of serine/threonine phosphatases.</title>
        <authorList>
            <person name="Farkas I."/>
            <person name="Dombradi V."/>
            <person name="Miskei M."/>
            <person name="Szabados L."/>
            <person name="Koncz C."/>
        </authorList>
    </citation>
    <scope>GENE FAMILY</scope>
    <scope>NOMENCLATURE</scope>
</reference>
<dbReference type="EC" id="3.1.3.16"/>
<dbReference type="EMBL" id="Z22596">
    <property type="protein sequence ID" value="CAA80312.1"/>
    <property type="molecule type" value="mRNA"/>
</dbReference>
<dbReference type="EMBL" id="AF030290">
    <property type="protein sequence ID" value="AAB86419.1"/>
    <property type="molecule type" value="Genomic_DNA"/>
</dbReference>
<dbReference type="EMBL" id="AB010071">
    <property type="protein sequence ID" value="BAB08595.1"/>
    <property type="molecule type" value="Genomic_DNA"/>
</dbReference>
<dbReference type="EMBL" id="CP002688">
    <property type="protein sequence ID" value="AED96607.1"/>
    <property type="molecule type" value="Genomic_DNA"/>
</dbReference>
<dbReference type="EMBL" id="BT024716">
    <property type="protein sequence ID" value="ABD59054.1"/>
    <property type="molecule type" value="mRNA"/>
</dbReference>
<dbReference type="PIR" id="S42559">
    <property type="entry name" value="S42559"/>
</dbReference>
<dbReference type="RefSeq" id="NP_200337.1">
    <property type="nucleotide sequence ID" value="NM_124908.4"/>
</dbReference>
<dbReference type="SMR" id="P48528"/>
<dbReference type="FunCoup" id="P48528">
    <property type="interactions" value="3731"/>
</dbReference>
<dbReference type="STRING" id="3702.P48528"/>
<dbReference type="iPTMnet" id="P48528"/>
<dbReference type="PaxDb" id="3702-AT5G55260.1"/>
<dbReference type="ProteomicsDB" id="236589"/>
<dbReference type="EnsemblPlants" id="AT5G55260.1">
    <property type="protein sequence ID" value="AT5G55260.1"/>
    <property type="gene ID" value="AT5G55260"/>
</dbReference>
<dbReference type="GeneID" id="835619"/>
<dbReference type="Gramene" id="AT5G55260.1">
    <property type="protein sequence ID" value="AT5G55260.1"/>
    <property type="gene ID" value="AT5G55260"/>
</dbReference>
<dbReference type="KEGG" id="ath:AT5G55260"/>
<dbReference type="Araport" id="AT5G55260"/>
<dbReference type="TAIR" id="AT5G55260">
    <property type="gene designation" value="PPX2"/>
</dbReference>
<dbReference type="eggNOG" id="KOG0372">
    <property type="taxonomic scope" value="Eukaryota"/>
</dbReference>
<dbReference type="HOGENOM" id="CLU_004962_8_1_1"/>
<dbReference type="InParanoid" id="P48528"/>
<dbReference type="OrthoDB" id="1930084at2759"/>
<dbReference type="PhylomeDB" id="P48528"/>
<dbReference type="PRO" id="PR:P48528"/>
<dbReference type="Proteomes" id="UP000006548">
    <property type="component" value="Chromosome 5"/>
</dbReference>
<dbReference type="ExpressionAtlas" id="P48528">
    <property type="expression patterns" value="baseline and differential"/>
</dbReference>
<dbReference type="GO" id="GO:0005829">
    <property type="term" value="C:cytosol"/>
    <property type="evidence" value="ECO:0000314"/>
    <property type="project" value="TAIR"/>
</dbReference>
<dbReference type="GO" id="GO:0005634">
    <property type="term" value="C:nucleus"/>
    <property type="evidence" value="ECO:0000314"/>
    <property type="project" value="TAIR"/>
</dbReference>
<dbReference type="GO" id="GO:0009532">
    <property type="term" value="C:plastid stroma"/>
    <property type="evidence" value="ECO:0007669"/>
    <property type="project" value="UniProtKB-SubCell"/>
</dbReference>
<dbReference type="GO" id="GO:0046872">
    <property type="term" value="F:metal ion binding"/>
    <property type="evidence" value="ECO:0007669"/>
    <property type="project" value="UniProtKB-KW"/>
</dbReference>
<dbReference type="GO" id="GO:0004722">
    <property type="term" value="F:protein serine/threonine phosphatase activity"/>
    <property type="evidence" value="ECO:0000250"/>
    <property type="project" value="TAIR"/>
</dbReference>
<dbReference type="GO" id="GO:0007131">
    <property type="term" value="P:reciprocal meiotic recombination"/>
    <property type="evidence" value="ECO:0000316"/>
    <property type="project" value="TAIR"/>
</dbReference>
<dbReference type="CDD" id="cd07415">
    <property type="entry name" value="MPP_PP2A_PP4_PP6"/>
    <property type="match status" value="1"/>
</dbReference>
<dbReference type="FunFam" id="3.60.21.10:FF:000010">
    <property type="entry name" value="Serine/threonine-protein phosphatase"/>
    <property type="match status" value="1"/>
</dbReference>
<dbReference type="Gene3D" id="3.60.21.10">
    <property type="match status" value="1"/>
</dbReference>
<dbReference type="InterPro" id="IPR004843">
    <property type="entry name" value="Calcineurin-like_PHP_ApaH"/>
</dbReference>
<dbReference type="InterPro" id="IPR029052">
    <property type="entry name" value="Metallo-depent_PP-like"/>
</dbReference>
<dbReference type="InterPro" id="IPR047129">
    <property type="entry name" value="PPA2-like"/>
</dbReference>
<dbReference type="InterPro" id="IPR006186">
    <property type="entry name" value="Ser/Thr-sp_prot-phosphatase"/>
</dbReference>
<dbReference type="PANTHER" id="PTHR45619">
    <property type="entry name" value="SERINE/THREONINE-PROTEIN PHOSPHATASE PP2A-RELATED"/>
    <property type="match status" value="1"/>
</dbReference>
<dbReference type="Pfam" id="PF00149">
    <property type="entry name" value="Metallophos"/>
    <property type="match status" value="1"/>
</dbReference>
<dbReference type="PRINTS" id="PR00114">
    <property type="entry name" value="STPHPHTASE"/>
</dbReference>
<dbReference type="SMART" id="SM00156">
    <property type="entry name" value="PP2Ac"/>
    <property type="match status" value="1"/>
</dbReference>
<dbReference type="SUPFAM" id="SSF56300">
    <property type="entry name" value="Metallo-dependent phosphatases"/>
    <property type="match status" value="1"/>
</dbReference>
<dbReference type="PROSITE" id="PS00125">
    <property type="entry name" value="SER_THR_PHOSPHATASE"/>
    <property type="match status" value="1"/>
</dbReference>
<feature type="chain" id="PRO_0000058887" description="Serine/threonine-protein phosphatase PP-X isozyme 2">
    <location>
        <begin position="1"/>
        <end position="305"/>
    </location>
</feature>
<feature type="active site" description="Proton donor" evidence="1">
    <location>
        <position position="112"/>
    </location>
</feature>
<feature type="binding site" evidence="1">
    <location>
        <position position="51"/>
    </location>
    <ligand>
        <name>Mn(2+)</name>
        <dbReference type="ChEBI" id="CHEBI:29035"/>
        <label>1</label>
    </ligand>
</feature>
<feature type="binding site" evidence="1">
    <location>
        <position position="53"/>
    </location>
    <ligand>
        <name>Mn(2+)</name>
        <dbReference type="ChEBI" id="CHEBI:29035"/>
        <label>1</label>
    </ligand>
</feature>
<feature type="binding site" evidence="1">
    <location>
        <position position="79"/>
    </location>
    <ligand>
        <name>Mn(2+)</name>
        <dbReference type="ChEBI" id="CHEBI:29035"/>
        <label>1</label>
    </ligand>
</feature>
<feature type="binding site" evidence="1">
    <location>
        <position position="79"/>
    </location>
    <ligand>
        <name>Mn(2+)</name>
        <dbReference type="ChEBI" id="CHEBI:29035"/>
        <label>2</label>
    </ligand>
</feature>
<feature type="binding site" evidence="1">
    <location>
        <position position="111"/>
    </location>
    <ligand>
        <name>Mn(2+)</name>
        <dbReference type="ChEBI" id="CHEBI:29035"/>
        <label>2</label>
    </ligand>
</feature>
<feature type="binding site" evidence="1">
    <location>
        <position position="161"/>
    </location>
    <ligand>
        <name>Mn(2+)</name>
        <dbReference type="ChEBI" id="CHEBI:29035"/>
        <label>2</label>
    </ligand>
</feature>
<feature type="binding site" evidence="1">
    <location>
        <position position="236"/>
    </location>
    <ligand>
        <name>Mn(2+)</name>
        <dbReference type="ChEBI" id="CHEBI:29035"/>
        <label>2</label>
    </ligand>
</feature>
<feature type="sequence conflict" description="In Ref. 1; CAA80312." evidence="3" ref="1">
    <original>N</original>
    <variation>H</variation>
    <location>
        <position position="73"/>
    </location>
</feature>
<feature type="sequence conflict" description="In Ref. 1; CAA80312." evidence="3" ref="1">
    <original>S</original>
    <variation>L</variation>
    <location>
        <position position="226"/>
    </location>
</feature>
<accession>P48528</accession>
<accession>O22626</accession>
<accession>Q29Q40</accession>
<sequence>MSDLDKQIEQLKRCEALKESEVKALCLKAMEILVEESNVQRVDAPVTICGDIHGQFYDMKELFKVGGDCPKTNYLFLGDFVDRGFYSVETFLLLLALKVRYPDRITLIRGNHESRQITQVYGFYDECLRKYGSVNVWRYCTDIFDYLSLSALVENKIFCVHGGLSPAIMTLDQIRAIDRKQEVPHDGAMCDLLWSDPEDIVDGWGLSPRGAGFLFGGSVVTSFNHSNNIDYICRAHQLVMEGYKWMFNSQIVTVWSAPNYCYRCGNVAAILELDENLNKEFRVFDAAPQESRGALAKKPAPDYFL</sequence>
<name>PPX2_ARATH</name>
<protein>
    <recommendedName>
        <fullName>Serine/threonine-protein phosphatase PP-X isozyme 2</fullName>
        <ecNumber>3.1.3.16</ecNumber>
    </recommendedName>
</protein>
<comment type="catalytic activity">
    <reaction>
        <text>O-phospho-L-seryl-[protein] + H2O = L-seryl-[protein] + phosphate</text>
        <dbReference type="Rhea" id="RHEA:20629"/>
        <dbReference type="Rhea" id="RHEA-COMP:9863"/>
        <dbReference type="Rhea" id="RHEA-COMP:11604"/>
        <dbReference type="ChEBI" id="CHEBI:15377"/>
        <dbReference type="ChEBI" id="CHEBI:29999"/>
        <dbReference type="ChEBI" id="CHEBI:43474"/>
        <dbReference type="ChEBI" id="CHEBI:83421"/>
        <dbReference type="EC" id="3.1.3.16"/>
    </reaction>
</comment>
<comment type="catalytic activity">
    <reaction>
        <text>O-phospho-L-threonyl-[protein] + H2O = L-threonyl-[protein] + phosphate</text>
        <dbReference type="Rhea" id="RHEA:47004"/>
        <dbReference type="Rhea" id="RHEA-COMP:11060"/>
        <dbReference type="Rhea" id="RHEA-COMP:11605"/>
        <dbReference type="ChEBI" id="CHEBI:15377"/>
        <dbReference type="ChEBI" id="CHEBI:30013"/>
        <dbReference type="ChEBI" id="CHEBI:43474"/>
        <dbReference type="ChEBI" id="CHEBI:61977"/>
        <dbReference type="EC" id="3.1.3.16"/>
    </reaction>
</comment>
<comment type="cofactor">
    <cofactor evidence="1">
        <name>Mn(2+)</name>
        <dbReference type="ChEBI" id="CHEBI:29035"/>
    </cofactor>
    <text evidence="1">Binds 2 manganese ions per subunit.</text>
</comment>
<comment type="subcellular location">
    <subcellularLocation>
        <location evidence="2">Plastid stroma</location>
    </subcellularLocation>
</comment>
<comment type="tissue specificity">
    <text evidence="2">Ubiquitous, mostly expressed in root mersitems, flowers, and vascular tissues.</text>
</comment>
<comment type="similarity">
    <text evidence="3">Belongs to the PPP phosphatase family. PP-4 (PP-X) subfamily.</text>
</comment>
<organism>
    <name type="scientific">Arabidopsis thaliana</name>
    <name type="common">Mouse-ear cress</name>
    <dbReference type="NCBI Taxonomy" id="3702"/>
    <lineage>
        <taxon>Eukaryota</taxon>
        <taxon>Viridiplantae</taxon>
        <taxon>Streptophyta</taxon>
        <taxon>Embryophyta</taxon>
        <taxon>Tracheophyta</taxon>
        <taxon>Spermatophyta</taxon>
        <taxon>Magnoliopsida</taxon>
        <taxon>eudicotyledons</taxon>
        <taxon>Gunneridae</taxon>
        <taxon>Pentapetalae</taxon>
        <taxon>rosids</taxon>
        <taxon>malvids</taxon>
        <taxon>Brassicales</taxon>
        <taxon>Brassicaceae</taxon>
        <taxon>Camelineae</taxon>
        <taxon>Arabidopsis</taxon>
    </lineage>
</organism>
<gene>
    <name type="primary">PPX2</name>
    <name type="ordered locus">At5g55260</name>
    <name type="ORF">MCO15.21</name>
</gene>